<feature type="chain" id="PRO_0000130416" description="Large ribosomal subunit protein uL29">
    <location>
        <begin position="1"/>
        <end position="65"/>
    </location>
</feature>
<organism>
    <name type="scientific">Methylococcus capsulatus (strain ATCC 33009 / NCIMB 11132 / Bath)</name>
    <dbReference type="NCBI Taxonomy" id="243233"/>
    <lineage>
        <taxon>Bacteria</taxon>
        <taxon>Pseudomonadati</taxon>
        <taxon>Pseudomonadota</taxon>
        <taxon>Gammaproteobacteria</taxon>
        <taxon>Methylococcales</taxon>
        <taxon>Methylococcaceae</taxon>
        <taxon>Methylococcus</taxon>
    </lineage>
</organism>
<dbReference type="EMBL" id="AE017282">
    <property type="protein sequence ID" value="AAU91471.1"/>
    <property type="molecule type" value="Genomic_DNA"/>
</dbReference>
<dbReference type="SMR" id="Q605C0"/>
<dbReference type="STRING" id="243233.MCA2364"/>
<dbReference type="KEGG" id="mca:MCA2364"/>
<dbReference type="eggNOG" id="COG0255">
    <property type="taxonomic scope" value="Bacteria"/>
</dbReference>
<dbReference type="HOGENOM" id="CLU_158491_1_2_6"/>
<dbReference type="Proteomes" id="UP000006821">
    <property type="component" value="Chromosome"/>
</dbReference>
<dbReference type="GO" id="GO:0022625">
    <property type="term" value="C:cytosolic large ribosomal subunit"/>
    <property type="evidence" value="ECO:0007669"/>
    <property type="project" value="TreeGrafter"/>
</dbReference>
<dbReference type="GO" id="GO:0003735">
    <property type="term" value="F:structural constituent of ribosome"/>
    <property type="evidence" value="ECO:0007669"/>
    <property type="project" value="InterPro"/>
</dbReference>
<dbReference type="GO" id="GO:0006412">
    <property type="term" value="P:translation"/>
    <property type="evidence" value="ECO:0007669"/>
    <property type="project" value="UniProtKB-UniRule"/>
</dbReference>
<dbReference type="CDD" id="cd00427">
    <property type="entry name" value="Ribosomal_L29_HIP"/>
    <property type="match status" value="1"/>
</dbReference>
<dbReference type="FunFam" id="1.10.287.310:FF:000001">
    <property type="entry name" value="50S ribosomal protein L29"/>
    <property type="match status" value="1"/>
</dbReference>
<dbReference type="Gene3D" id="1.10.287.310">
    <property type="match status" value="1"/>
</dbReference>
<dbReference type="HAMAP" id="MF_00374">
    <property type="entry name" value="Ribosomal_uL29"/>
    <property type="match status" value="1"/>
</dbReference>
<dbReference type="InterPro" id="IPR050063">
    <property type="entry name" value="Ribosomal_protein_uL29"/>
</dbReference>
<dbReference type="InterPro" id="IPR001854">
    <property type="entry name" value="Ribosomal_uL29"/>
</dbReference>
<dbReference type="InterPro" id="IPR036049">
    <property type="entry name" value="Ribosomal_uL29_sf"/>
</dbReference>
<dbReference type="NCBIfam" id="TIGR00012">
    <property type="entry name" value="L29"/>
    <property type="match status" value="1"/>
</dbReference>
<dbReference type="PANTHER" id="PTHR10916">
    <property type="entry name" value="60S RIBOSOMAL PROTEIN L35/50S RIBOSOMAL PROTEIN L29"/>
    <property type="match status" value="1"/>
</dbReference>
<dbReference type="PANTHER" id="PTHR10916:SF0">
    <property type="entry name" value="LARGE RIBOSOMAL SUBUNIT PROTEIN UL29C"/>
    <property type="match status" value="1"/>
</dbReference>
<dbReference type="Pfam" id="PF00831">
    <property type="entry name" value="Ribosomal_L29"/>
    <property type="match status" value="1"/>
</dbReference>
<dbReference type="SUPFAM" id="SSF46561">
    <property type="entry name" value="Ribosomal protein L29 (L29p)"/>
    <property type="match status" value="1"/>
</dbReference>
<accession>Q605C0</accession>
<name>RL29_METCA</name>
<sequence length="65" mass="7506">MMKASELRAKQVEELKSTLMDLHREAFSLRMQKATGQLSHFHRIRAVRRDIARVNMVLAEKGGKV</sequence>
<keyword id="KW-1185">Reference proteome</keyword>
<keyword id="KW-0687">Ribonucleoprotein</keyword>
<keyword id="KW-0689">Ribosomal protein</keyword>
<gene>
    <name evidence="1" type="primary">rpmC</name>
    <name type="ordered locus">MCA2364</name>
</gene>
<evidence type="ECO:0000255" key="1">
    <source>
        <dbReference type="HAMAP-Rule" id="MF_00374"/>
    </source>
</evidence>
<evidence type="ECO:0000305" key="2"/>
<proteinExistence type="inferred from homology"/>
<comment type="similarity">
    <text evidence="1">Belongs to the universal ribosomal protein uL29 family.</text>
</comment>
<reference key="1">
    <citation type="journal article" date="2004" name="PLoS Biol.">
        <title>Genomic insights into methanotrophy: the complete genome sequence of Methylococcus capsulatus (Bath).</title>
        <authorList>
            <person name="Ward N.L."/>
            <person name="Larsen O."/>
            <person name="Sakwa J."/>
            <person name="Bruseth L."/>
            <person name="Khouri H.M."/>
            <person name="Durkin A.S."/>
            <person name="Dimitrov G."/>
            <person name="Jiang L."/>
            <person name="Scanlan D."/>
            <person name="Kang K.H."/>
            <person name="Lewis M.R."/>
            <person name="Nelson K.E."/>
            <person name="Methe B.A."/>
            <person name="Wu M."/>
            <person name="Heidelberg J.F."/>
            <person name="Paulsen I.T."/>
            <person name="Fouts D.E."/>
            <person name="Ravel J."/>
            <person name="Tettelin H."/>
            <person name="Ren Q."/>
            <person name="Read T.D."/>
            <person name="DeBoy R.T."/>
            <person name="Seshadri R."/>
            <person name="Salzberg S.L."/>
            <person name="Jensen H.B."/>
            <person name="Birkeland N.K."/>
            <person name="Nelson W.C."/>
            <person name="Dodson R.J."/>
            <person name="Grindhaug S.H."/>
            <person name="Holt I.E."/>
            <person name="Eidhammer I."/>
            <person name="Jonasen I."/>
            <person name="Vanaken S."/>
            <person name="Utterback T.R."/>
            <person name="Feldblyum T.V."/>
            <person name="Fraser C.M."/>
            <person name="Lillehaug J.R."/>
            <person name="Eisen J.A."/>
        </authorList>
    </citation>
    <scope>NUCLEOTIDE SEQUENCE [LARGE SCALE GENOMIC DNA]</scope>
    <source>
        <strain>ATCC 33009 / NCIMB 11132 / Bath</strain>
    </source>
</reference>
<protein>
    <recommendedName>
        <fullName evidence="1">Large ribosomal subunit protein uL29</fullName>
    </recommendedName>
    <alternativeName>
        <fullName evidence="2">50S ribosomal protein L29</fullName>
    </alternativeName>
</protein>